<organism>
    <name type="scientific">Chlorobaculum parvum (strain DSM 263 / NCIMB 8327)</name>
    <name type="common">Chlorobium vibrioforme subsp. thiosulfatophilum</name>
    <dbReference type="NCBI Taxonomy" id="517417"/>
    <lineage>
        <taxon>Bacteria</taxon>
        <taxon>Pseudomonadati</taxon>
        <taxon>Chlorobiota</taxon>
        <taxon>Chlorobiia</taxon>
        <taxon>Chlorobiales</taxon>
        <taxon>Chlorobiaceae</taxon>
        <taxon>Chlorobaculum</taxon>
    </lineage>
</organism>
<comment type="function">
    <text evidence="1">Endonuclease IV plays a role in DNA repair. It cleaves phosphodiester bonds at apurinic or apyrimidinic (AP) sites, generating a 3'-hydroxyl group and a 5'-terminal sugar phosphate.</text>
</comment>
<comment type="catalytic activity">
    <reaction evidence="1">
        <text>Endonucleolytic cleavage to 5'-phosphooligonucleotide end-products.</text>
        <dbReference type="EC" id="3.1.21.2"/>
    </reaction>
</comment>
<comment type="cofactor">
    <cofactor evidence="1">
        <name>Zn(2+)</name>
        <dbReference type="ChEBI" id="CHEBI:29105"/>
    </cofactor>
    <text evidence="1">Binds 3 Zn(2+) ions.</text>
</comment>
<comment type="similarity">
    <text evidence="1">Belongs to the AP endonuclease 2 family.</text>
</comment>
<reference key="1">
    <citation type="submission" date="2008-06" db="EMBL/GenBank/DDBJ databases">
        <title>Complete sequence of Chlorobaculum parvum NCIB 8327.</title>
        <authorList>
            <consortium name="US DOE Joint Genome Institute"/>
            <person name="Lucas S."/>
            <person name="Copeland A."/>
            <person name="Lapidus A."/>
            <person name="Glavina del Rio T."/>
            <person name="Dalin E."/>
            <person name="Tice H."/>
            <person name="Bruce D."/>
            <person name="Goodwin L."/>
            <person name="Pitluck S."/>
            <person name="Schmutz J."/>
            <person name="Larimer F."/>
            <person name="Land M."/>
            <person name="Hauser L."/>
            <person name="Kyrpides N."/>
            <person name="Mikhailova N."/>
            <person name="Zhao F."/>
            <person name="Li T."/>
            <person name="Liu Z."/>
            <person name="Overmann J."/>
            <person name="Bryant D.A."/>
            <person name="Richardson P."/>
        </authorList>
    </citation>
    <scope>NUCLEOTIDE SEQUENCE [LARGE SCALE GENOMIC DNA]</scope>
    <source>
        <strain>DSM 263 / NCIMB 8327</strain>
    </source>
</reference>
<name>END4_CHLP8</name>
<sequence length="281" mass="31069">MKRVGAHVSIAGGVENAPLNAQKIGAKAFAMFTRNQRQWHSAPLSTASIEAFRRNCEEAGFLPQHILPHDSYLINLGAPEVEKLEKSRKAFTTEMQRAEALGLTMLNFHPGSHLNLVSENECLATIAESVNLSLNATAGVTAVIENTAGQGSNLGWRFEHLARIIELVEDKSRVGVCLDTCHLFASGYDLRTPEAFDATLAEFDRVVGLSYLRGMHLNDAKQKLGSRVDRHACIGEGMIGREAFVHLMQHPAMEEIPLILETPNSESWAEEIEMLYSFEKE</sequence>
<evidence type="ECO:0000255" key="1">
    <source>
        <dbReference type="HAMAP-Rule" id="MF_00152"/>
    </source>
</evidence>
<feature type="chain" id="PRO_1000096872" description="Probable endonuclease 4">
    <location>
        <begin position="1"/>
        <end position="281"/>
    </location>
</feature>
<feature type="binding site" evidence="1">
    <location>
        <position position="69"/>
    </location>
    <ligand>
        <name>Zn(2+)</name>
        <dbReference type="ChEBI" id="CHEBI:29105"/>
        <label>1</label>
    </ligand>
</feature>
<feature type="binding site" evidence="1">
    <location>
        <position position="109"/>
    </location>
    <ligand>
        <name>Zn(2+)</name>
        <dbReference type="ChEBI" id="CHEBI:29105"/>
        <label>1</label>
    </ligand>
</feature>
<feature type="binding site" evidence="1">
    <location>
        <position position="145"/>
    </location>
    <ligand>
        <name>Zn(2+)</name>
        <dbReference type="ChEBI" id="CHEBI:29105"/>
        <label>1</label>
    </ligand>
</feature>
<feature type="binding site" evidence="1">
    <location>
        <position position="145"/>
    </location>
    <ligand>
        <name>Zn(2+)</name>
        <dbReference type="ChEBI" id="CHEBI:29105"/>
        <label>2</label>
    </ligand>
</feature>
<feature type="binding site" evidence="1">
    <location>
        <position position="179"/>
    </location>
    <ligand>
        <name>Zn(2+)</name>
        <dbReference type="ChEBI" id="CHEBI:29105"/>
        <label>2</label>
    </ligand>
</feature>
<feature type="binding site" evidence="1">
    <location>
        <position position="182"/>
    </location>
    <ligand>
        <name>Zn(2+)</name>
        <dbReference type="ChEBI" id="CHEBI:29105"/>
        <label>3</label>
    </ligand>
</feature>
<feature type="binding site" evidence="1">
    <location>
        <position position="216"/>
    </location>
    <ligand>
        <name>Zn(2+)</name>
        <dbReference type="ChEBI" id="CHEBI:29105"/>
        <label>2</label>
    </ligand>
</feature>
<feature type="binding site" evidence="1">
    <location>
        <position position="229"/>
    </location>
    <ligand>
        <name>Zn(2+)</name>
        <dbReference type="ChEBI" id="CHEBI:29105"/>
        <label>3</label>
    </ligand>
</feature>
<feature type="binding site" evidence="1">
    <location>
        <position position="231"/>
    </location>
    <ligand>
        <name>Zn(2+)</name>
        <dbReference type="ChEBI" id="CHEBI:29105"/>
        <label>3</label>
    </ligand>
</feature>
<feature type="binding site" evidence="1">
    <location>
        <position position="261"/>
    </location>
    <ligand>
        <name>Zn(2+)</name>
        <dbReference type="ChEBI" id="CHEBI:29105"/>
        <label>2</label>
    </ligand>
</feature>
<keyword id="KW-0227">DNA damage</keyword>
<keyword id="KW-0234">DNA repair</keyword>
<keyword id="KW-0255">Endonuclease</keyword>
<keyword id="KW-0378">Hydrolase</keyword>
<keyword id="KW-0479">Metal-binding</keyword>
<keyword id="KW-0540">Nuclease</keyword>
<keyword id="KW-0862">Zinc</keyword>
<protein>
    <recommendedName>
        <fullName evidence="1">Probable endonuclease 4</fullName>
        <ecNumber evidence="1">3.1.21.2</ecNumber>
    </recommendedName>
    <alternativeName>
        <fullName evidence="1">Endodeoxyribonuclease IV</fullName>
    </alternativeName>
    <alternativeName>
        <fullName evidence="1">Endonuclease IV</fullName>
    </alternativeName>
</protein>
<dbReference type="EC" id="3.1.21.2" evidence="1"/>
<dbReference type="EMBL" id="CP001099">
    <property type="protein sequence ID" value="ACF12112.1"/>
    <property type="molecule type" value="Genomic_DNA"/>
</dbReference>
<dbReference type="RefSeq" id="WP_012502945.1">
    <property type="nucleotide sequence ID" value="NC_011027.1"/>
</dbReference>
<dbReference type="SMR" id="B3QQA9"/>
<dbReference type="STRING" id="517417.Cpar_1720"/>
<dbReference type="KEGG" id="cpc:Cpar_1720"/>
<dbReference type="eggNOG" id="COG0648">
    <property type="taxonomic scope" value="Bacteria"/>
</dbReference>
<dbReference type="HOGENOM" id="CLU_025885_0_4_10"/>
<dbReference type="OrthoDB" id="9805666at2"/>
<dbReference type="Proteomes" id="UP000008811">
    <property type="component" value="Chromosome"/>
</dbReference>
<dbReference type="GO" id="GO:0008833">
    <property type="term" value="F:deoxyribonuclease IV (phage-T4-induced) activity"/>
    <property type="evidence" value="ECO:0007669"/>
    <property type="project" value="UniProtKB-UniRule"/>
</dbReference>
<dbReference type="GO" id="GO:0003677">
    <property type="term" value="F:DNA binding"/>
    <property type="evidence" value="ECO:0007669"/>
    <property type="project" value="InterPro"/>
</dbReference>
<dbReference type="GO" id="GO:0003906">
    <property type="term" value="F:DNA-(apurinic or apyrimidinic site) endonuclease activity"/>
    <property type="evidence" value="ECO:0007669"/>
    <property type="project" value="TreeGrafter"/>
</dbReference>
<dbReference type="GO" id="GO:0008081">
    <property type="term" value="F:phosphoric diester hydrolase activity"/>
    <property type="evidence" value="ECO:0007669"/>
    <property type="project" value="TreeGrafter"/>
</dbReference>
<dbReference type="GO" id="GO:0008270">
    <property type="term" value="F:zinc ion binding"/>
    <property type="evidence" value="ECO:0007669"/>
    <property type="project" value="UniProtKB-UniRule"/>
</dbReference>
<dbReference type="GO" id="GO:0006284">
    <property type="term" value="P:base-excision repair"/>
    <property type="evidence" value="ECO:0007669"/>
    <property type="project" value="TreeGrafter"/>
</dbReference>
<dbReference type="CDD" id="cd00019">
    <property type="entry name" value="AP2Ec"/>
    <property type="match status" value="1"/>
</dbReference>
<dbReference type="FunFam" id="3.20.20.150:FF:000001">
    <property type="entry name" value="Probable endonuclease 4"/>
    <property type="match status" value="1"/>
</dbReference>
<dbReference type="Gene3D" id="3.20.20.150">
    <property type="entry name" value="Divalent-metal-dependent TIM barrel enzymes"/>
    <property type="match status" value="1"/>
</dbReference>
<dbReference type="HAMAP" id="MF_00152">
    <property type="entry name" value="Nfo"/>
    <property type="match status" value="1"/>
</dbReference>
<dbReference type="InterPro" id="IPR001719">
    <property type="entry name" value="AP_endonuc_2"/>
</dbReference>
<dbReference type="InterPro" id="IPR018246">
    <property type="entry name" value="AP_endonuc_F2_Zn_BS"/>
</dbReference>
<dbReference type="InterPro" id="IPR036237">
    <property type="entry name" value="Xyl_isomerase-like_sf"/>
</dbReference>
<dbReference type="InterPro" id="IPR013022">
    <property type="entry name" value="Xyl_isomerase-like_TIM-brl"/>
</dbReference>
<dbReference type="NCBIfam" id="TIGR00587">
    <property type="entry name" value="nfo"/>
    <property type="match status" value="1"/>
</dbReference>
<dbReference type="NCBIfam" id="NF002199">
    <property type="entry name" value="PRK01060.1-4"/>
    <property type="match status" value="1"/>
</dbReference>
<dbReference type="PANTHER" id="PTHR21445:SF0">
    <property type="entry name" value="APURINIC-APYRIMIDINIC ENDONUCLEASE"/>
    <property type="match status" value="1"/>
</dbReference>
<dbReference type="PANTHER" id="PTHR21445">
    <property type="entry name" value="ENDONUCLEASE IV ENDODEOXYRIBONUCLEASE IV"/>
    <property type="match status" value="1"/>
</dbReference>
<dbReference type="Pfam" id="PF01261">
    <property type="entry name" value="AP_endonuc_2"/>
    <property type="match status" value="1"/>
</dbReference>
<dbReference type="SMART" id="SM00518">
    <property type="entry name" value="AP2Ec"/>
    <property type="match status" value="1"/>
</dbReference>
<dbReference type="SUPFAM" id="SSF51658">
    <property type="entry name" value="Xylose isomerase-like"/>
    <property type="match status" value="1"/>
</dbReference>
<dbReference type="PROSITE" id="PS00729">
    <property type="entry name" value="AP_NUCLEASE_F2_1"/>
    <property type="match status" value="1"/>
</dbReference>
<dbReference type="PROSITE" id="PS00730">
    <property type="entry name" value="AP_NUCLEASE_F2_2"/>
    <property type="match status" value="1"/>
</dbReference>
<dbReference type="PROSITE" id="PS00731">
    <property type="entry name" value="AP_NUCLEASE_F2_3"/>
    <property type="match status" value="1"/>
</dbReference>
<dbReference type="PROSITE" id="PS51432">
    <property type="entry name" value="AP_NUCLEASE_F2_4"/>
    <property type="match status" value="1"/>
</dbReference>
<accession>B3QQA9</accession>
<gene>
    <name evidence="1" type="primary">nfo</name>
    <name type="ordered locus">Cpar_1720</name>
</gene>
<proteinExistence type="inferred from homology"/>